<proteinExistence type="inferred from homology"/>
<name>G6PI_CHESB</name>
<comment type="function">
    <text evidence="1">Catalyzes the reversible isomerization of glucose-6-phosphate to fructose-6-phosphate.</text>
</comment>
<comment type="catalytic activity">
    <reaction evidence="1">
        <text>alpha-D-glucose 6-phosphate = beta-D-fructose 6-phosphate</text>
        <dbReference type="Rhea" id="RHEA:11816"/>
        <dbReference type="ChEBI" id="CHEBI:57634"/>
        <dbReference type="ChEBI" id="CHEBI:58225"/>
        <dbReference type="EC" id="5.3.1.9"/>
    </reaction>
</comment>
<comment type="pathway">
    <text evidence="1">Carbohydrate biosynthesis; gluconeogenesis.</text>
</comment>
<comment type="pathway">
    <text evidence="1">Carbohydrate degradation; glycolysis; D-glyceraldehyde 3-phosphate and glycerone phosphate from D-glucose: step 2/4.</text>
</comment>
<comment type="subcellular location">
    <subcellularLocation>
        <location evidence="1">Cytoplasm</location>
    </subcellularLocation>
</comment>
<comment type="similarity">
    <text evidence="1">Belongs to the GPI family.</text>
</comment>
<gene>
    <name evidence="1" type="primary">pgi</name>
    <name type="ordered locus">Meso_0070</name>
</gene>
<accession>Q11MA0</accession>
<evidence type="ECO:0000255" key="1">
    <source>
        <dbReference type="HAMAP-Rule" id="MF_00473"/>
    </source>
</evidence>
<protein>
    <recommendedName>
        <fullName evidence="1">Glucose-6-phosphate isomerase</fullName>
        <shortName evidence="1">GPI</shortName>
        <ecNumber evidence="1">5.3.1.9</ecNumber>
    </recommendedName>
    <alternativeName>
        <fullName evidence="1">Phosphoglucose isomerase</fullName>
        <shortName evidence="1">PGI</shortName>
    </alternativeName>
    <alternativeName>
        <fullName evidence="1">Phosphohexose isomerase</fullName>
        <shortName evidence="1">PHI</shortName>
    </alternativeName>
</protein>
<reference key="1">
    <citation type="submission" date="2006-06" db="EMBL/GenBank/DDBJ databases">
        <title>Complete sequence of chromosome of Mesorhizobium sp. BNC1.</title>
        <authorList>
            <consortium name="US DOE Joint Genome Institute"/>
            <person name="Copeland A."/>
            <person name="Lucas S."/>
            <person name="Lapidus A."/>
            <person name="Barry K."/>
            <person name="Detter J.C."/>
            <person name="Glavina del Rio T."/>
            <person name="Hammon N."/>
            <person name="Israni S."/>
            <person name="Dalin E."/>
            <person name="Tice H."/>
            <person name="Pitluck S."/>
            <person name="Chertkov O."/>
            <person name="Brettin T."/>
            <person name="Bruce D."/>
            <person name="Han C."/>
            <person name="Tapia R."/>
            <person name="Gilna P."/>
            <person name="Schmutz J."/>
            <person name="Larimer F."/>
            <person name="Land M."/>
            <person name="Hauser L."/>
            <person name="Kyrpides N."/>
            <person name="Mikhailova N."/>
            <person name="Richardson P."/>
        </authorList>
    </citation>
    <scope>NUCLEOTIDE SEQUENCE [LARGE SCALE GENOMIC DNA]</scope>
    <source>
        <strain>BNC1</strain>
    </source>
</reference>
<organism>
    <name type="scientific">Chelativorans sp. (strain BNC1)</name>
    <dbReference type="NCBI Taxonomy" id="266779"/>
    <lineage>
        <taxon>Bacteria</taxon>
        <taxon>Pseudomonadati</taxon>
        <taxon>Pseudomonadota</taxon>
        <taxon>Alphaproteobacteria</taxon>
        <taxon>Hyphomicrobiales</taxon>
        <taxon>Phyllobacteriaceae</taxon>
        <taxon>Chelativorans</taxon>
    </lineage>
</organism>
<sequence length="545" mass="59798">MSAYARALDALRQHRRETEDFDLRQAFGADPDRFSRCSAALDDMLLDYSKCAVSDETLALLDKIAEAAGVIERREEMFSAKRINVTENRAVLHTALRNDSTRPVMLDGKDVMPDVEAVLAAMSTFSEGIRSGTIKAATGKSFTDVVNIGIGGSDLGPAMATLALAPYHDGPRLHYVSNVDGAHIHDTLKALDPDTTLFIIASKTFTTIETMTNAGTARSWIAEKLGQDAVGSHFAAVSTALDKVAAFGIDESRVFGFWDWVGGRYSLWSAIGLPIMIAIGPENFRRFLDGAELMDRHFREAPSRENLPMMLGLIGFWHRVICGYPARAVIPYDQRLARLPAYLQQLDMESNGKRVTFEGESVTVPTGPLVWGEPGTNGQHAFFQLLHQGTDIIPVEFMIAARGHEPELKHHHDLLIANCLAQSEALMKGRTLQEAKAQLLAKGMSEAEADKLAPHRVFPGNRPSVTIIYEKLDPFTLGRLIALYEHRVFVEAALFRINAFDQWGVELGKELATELLPVVEGKKDASGRDSSTAGLVAQIAALRDS</sequence>
<keyword id="KW-0963">Cytoplasm</keyword>
<keyword id="KW-0312">Gluconeogenesis</keyword>
<keyword id="KW-0324">Glycolysis</keyword>
<keyword id="KW-0413">Isomerase</keyword>
<dbReference type="EC" id="5.3.1.9" evidence="1"/>
<dbReference type="EMBL" id="CP000390">
    <property type="protein sequence ID" value="ABG61475.1"/>
    <property type="molecule type" value="Genomic_DNA"/>
</dbReference>
<dbReference type="SMR" id="Q11MA0"/>
<dbReference type="STRING" id="266779.Meso_0070"/>
<dbReference type="KEGG" id="mes:Meso_0070"/>
<dbReference type="eggNOG" id="COG0166">
    <property type="taxonomic scope" value="Bacteria"/>
</dbReference>
<dbReference type="HOGENOM" id="CLU_017947_3_1_5"/>
<dbReference type="OrthoDB" id="140919at2"/>
<dbReference type="UniPathway" id="UPA00109">
    <property type="reaction ID" value="UER00181"/>
</dbReference>
<dbReference type="UniPathway" id="UPA00138"/>
<dbReference type="GO" id="GO:0005829">
    <property type="term" value="C:cytosol"/>
    <property type="evidence" value="ECO:0007669"/>
    <property type="project" value="TreeGrafter"/>
</dbReference>
<dbReference type="GO" id="GO:0097367">
    <property type="term" value="F:carbohydrate derivative binding"/>
    <property type="evidence" value="ECO:0007669"/>
    <property type="project" value="InterPro"/>
</dbReference>
<dbReference type="GO" id="GO:0004347">
    <property type="term" value="F:glucose-6-phosphate isomerase activity"/>
    <property type="evidence" value="ECO:0007669"/>
    <property type="project" value="UniProtKB-UniRule"/>
</dbReference>
<dbReference type="GO" id="GO:0048029">
    <property type="term" value="F:monosaccharide binding"/>
    <property type="evidence" value="ECO:0007669"/>
    <property type="project" value="TreeGrafter"/>
</dbReference>
<dbReference type="GO" id="GO:0006094">
    <property type="term" value="P:gluconeogenesis"/>
    <property type="evidence" value="ECO:0007669"/>
    <property type="project" value="UniProtKB-UniRule"/>
</dbReference>
<dbReference type="GO" id="GO:0051156">
    <property type="term" value="P:glucose 6-phosphate metabolic process"/>
    <property type="evidence" value="ECO:0007669"/>
    <property type="project" value="TreeGrafter"/>
</dbReference>
<dbReference type="GO" id="GO:0006096">
    <property type="term" value="P:glycolytic process"/>
    <property type="evidence" value="ECO:0007669"/>
    <property type="project" value="UniProtKB-UniRule"/>
</dbReference>
<dbReference type="CDD" id="cd05015">
    <property type="entry name" value="SIS_PGI_1"/>
    <property type="match status" value="1"/>
</dbReference>
<dbReference type="CDD" id="cd05016">
    <property type="entry name" value="SIS_PGI_2"/>
    <property type="match status" value="1"/>
</dbReference>
<dbReference type="FunFam" id="3.40.50.10490:FF:000018">
    <property type="entry name" value="Glucose-6-phosphate isomerase"/>
    <property type="match status" value="1"/>
</dbReference>
<dbReference type="Gene3D" id="1.10.1390.10">
    <property type="match status" value="1"/>
</dbReference>
<dbReference type="Gene3D" id="3.40.50.10490">
    <property type="entry name" value="Glucose-6-phosphate isomerase like protein, domain 1"/>
    <property type="match status" value="2"/>
</dbReference>
<dbReference type="HAMAP" id="MF_00473">
    <property type="entry name" value="G6P_isomerase"/>
    <property type="match status" value="1"/>
</dbReference>
<dbReference type="InterPro" id="IPR001672">
    <property type="entry name" value="G6P_Isomerase"/>
</dbReference>
<dbReference type="InterPro" id="IPR023096">
    <property type="entry name" value="G6P_Isomerase_C"/>
</dbReference>
<dbReference type="InterPro" id="IPR018189">
    <property type="entry name" value="Phosphoglucose_isomerase_CS"/>
</dbReference>
<dbReference type="InterPro" id="IPR046348">
    <property type="entry name" value="SIS_dom_sf"/>
</dbReference>
<dbReference type="InterPro" id="IPR035476">
    <property type="entry name" value="SIS_PGI_1"/>
</dbReference>
<dbReference type="InterPro" id="IPR035482">
    <property type="entry name" value="SIS_PGI_2"/>
</dbReference>
<dbReference type="NCBIfam" id="NF001211">
    <property type="entry name" value="PRK00179.1"/>
    <property type="match status" value="1"/>
</dbReference>
<dbReference type="PANTHER" id="PTHR11469">
    <property type="entry name" value="GLUCOSE-6-PHOSPHATE ISOMERASE"/>
    <property type="match status" value="1"/>
</dbReference>
<dbReference type="PANTHER" id="PTHR11469:SF1">
    <property type="entry name" value="GLUCOSE-6-PHOSPHATE ISOMERASE"/>
    <property type="match status" value="1"/>
</dbReference>
<dbReference type="Pfam" id="PF00342">
    <property type="entry name" value="PGI"/>
    <property type="match status" value="1"/>
</dbReference>
<dbReference type="PRINTS" id="PR00662">
    <property type="entry name" value="G6PISOMERASE"/>
</dbReference>
<dbReference type="SUPFAM" id="SSF53697">
    <property type="entry name" value="SIS domain"/>
    <property type="match status" value="1"/>
</dbReference>
<dbReference type="PROSITE" id="PS00765">
    <property type="entry name" value="P_GLUCOSE_ISOMERASE_1"/>
    <property type="match status" value="1"/>
</dbReference>
<dbReference type="PROSITE" id="PS00174">
    <property type="entry name" value="P_GLUCOSE_ISOMERASE_2"/>
    <property type="match status" value="1"/>
</dbReference>
<dbReference type="PROSITE" id="PS51463">
    <property type="entry name" value="P_GLUCOSE_ISOMERASE_3"/>
    <property type="match status" value="1"/>
</dbReference>
<feature type="chain" id="PRO_0000252629" description="Glucose-6-phosphate isomerase">
    <location>
        <begin position="1"/>
        <end position="545"/>
    </location>
</feature>
<feature type="active site" description="Proton donor" evidence="1">
    <location>
        <position position="349"/>
    </location>
</feature>
<feature type="active site" evidence="1">
    <location>
        <position position="380"/>
    </location>
</feature>
<feature type="active site" evidence="1">
    <location>
        <position position="509"/>
    </location>
</feature>